<keyword id="KW-0217">Developmental protein</keyword>
<keyword id="KW-0238">DNA-binding</keyword>
<keyword id="KW-0371">Homeobox</keyword>
<keyword id="KW-0539">Nucleus</keyword>
<keyword id="KW-1185">Reference proteome</keyword>
<keyword id="KW-0804">Transcription</keyword>
<keyword id="KW-0805">Transcription regulation</keyword>
<protein>
    <recommendedName>
        <fullName>Homeobox protein Hox-D12a</fullName>
        <shortName>Hox-D12</shortName>
    </recommendedName>
</protein>
<name>HXDCA_DANRE</name>
<dbReference type="EMBL" id="X87753">
    <property type="protein sequence ID" value="CAA61032.1"/>
    <property type="status" value="ALT_SEQ"/>
    <property type="molecule type" value="Genomic_DNA"/>
</dbReference>
<dbReference type="EMBL" id="DQ069273">
    <property type="protein sequence ID" value="AAY87055.1"/>
    <property type="molecule type" value="mRNA"/>
</dbReference>
<dbReference type="EMBL" id="Y14547">
    <property type="protein sequence ID" value="CAA74882.1"/>
    <property type="status" value="ALT_FRAME"/>
    <property type="molecule type" value="mRNA"/>
</dbReference>
<dbReference type="RefSeq" id="XP_005172570.1">
    <property type="nucleotide sequence ID" value="XM_005172513.5"/>
</dbReference>
<dbReference type="SMR" id="Q90471"/>
<dbReference type="FunCoup" id="Q90471">
    <property type="interactions" value="216"/>
</dbReference>
<dbReference type="STRING" id="7955.ENSDARP00000076775"/>
<dbReference type="PaxDb" id="7955-ENSDARP00000076775"/>
<dbReference type="Ensembl" id="ENSDART00000142842">
    <property type="protein sequence ID" value="ENSDARP00000121699"/>
    <property type="gene ID" value="ENSDARG00000059263"/>
</dbReference>
<dbReference type="GeneID" id="100006598"/>
<dbReference type="AGR" id="ZFIN:ZDB-GENE-990415-118"/>
<dbReference type="CTD" id="100006598"/>
<dbReference type="ZFIN" id="ZDB-GENE-990415-118">
    <property type="gene designation" value="hoxd12a"/>
</dbReference>
<dbReference type="eggNOG" id="KOG0487">
    <property type="taxonomic scope" value="Eukaryota"/>
</dbReference>
<dbReference type="InParanoid" id="Q90471"/>
<dbReference type="OrthoDB" id="6159439at2759"/>
<dbReference type="PhylomeDB" id="Q90471"/>
<dbReference type="PRO" id="PR:Q90471"/>
<dbReference type="Proteomes" id="UP000000437">
    <property type="component" value="Chromosome 9"/>
</dbReference>
<dbReference type="Bgee" id="ENSDARG00000059263">
    <property type="expression patterns" value="Expressed in tail bud paraxial mesoderm and 17 other cell types or tissues"/>
</dbReference>
<dbReference type="ExpressionAtlas" id="Q90471">
    <property type="expression patterns" value="baseline"/>
</dbReference>
<dbReference type="GO" id="GO:0005634">
    <property type="term" value="C:nucleus"/>
    <property type="evidence" value="ECO:0007669"/>
    <property type="project" value="UniProtKB-SubCell"/>
</dbReference>
<dbReference type="GO" id="GO:0000981">
    <property type="term" value="F:DNA-binding transcription factor activity, RNA polymerase II-specific"/>
    <property type="evidence" value="ECO:0007669"/>
    <property type="project" value="InterPro"/>
</dbReference>
<dbReference type="GO" id="GO:1990837">
    <property type="term" value="F:sequence-specific double-stranded DNA binding"/>
    <property type="evidence" value="ECO:0000318"/>
    <property type="project" value="GO_Central"/>
</dbReference>
<dbReference type="CDD" id="cd00086">
    <property type="entry name" value="homeodomain"/>
    <property type="match status" value="1"/>
</dbReference>
<dbReference type="Gene3D" id="1.10.10.60">
    <property type="entry name" value="Homeodomain-like"/>
    <property type="match status" value="1"/>
</dbReference>
<dbReference type="InterPro" id="IPR001356">
    <property type="entry name" value="HD"/>
</dbReference>
<dbReference type="InterPro" id="IPR020479">
    <property type="entry name" value="HD_metazoa"/>
</dbReference>
<dbReference type="InterPro" id="IPR017970">
    <property type="entry name" value="Homeobox_CS"/>
</dbReference>
<dbReference type="InterPro" id="IPR009057">
    <property type="entry name" value="Homeodomain-like_sf"/>
</dbReference>
<dbReference type="PANTHER" id="PTHR46440:SF1">
    <property type="entry name" value="HOMEOBOX PROTEIN HOX-D12"/>
    <property type="match status" value="1"/>
</dbReference>
<dbReference type="PANTHER" id="PTHR46440">
    <property type="entry name" value="HOMEOBOX PROTEIN HOX-D12-RELATED"/>
    <property type="match status" value="1"/>
</dbReference>
<dbReference type="Pfam" id="PF00046">
    <property type="entry name" value="Homeodomain"/>
    <property type="match status" value="1"/>
</dbReference>
<dbReference type="PRINTS" id="PR00024">
    <property type="entry name" value="HOMEOBOX"/>
</dbReference>
<dbReference type="SMART" id="SM00389">
    <property type="entry name" value="HOX"/>
    <property type="match status" value="1"/>
</dbReference>
<dbReference type="SUPFAM" id="SSF46689">
    <property type="entry name" value="Homeodomain-like"/>
    <property type="match status" value="1"/>
</dbReference>
<dbReference type="PROSITE" id="PS00027">
    <property type="entry name" value="HOMEOBOX_1"/>
    <property type="match status" value="1"/>
</dbReference>
<dbReference type="PROSITE" id="PS50071">
    <property type="entry name" value="HOMEOBOX_2"/>
    <property type="match status" value="1"/>
</dbReference>
<reference key="1">
    <citation type="journal article" date="1996" name="Mech. Dev.">
        <title>Teleost HoxD and HoxA genes: comparison with tetrapods and functional evolution of the HOXD complex.</title>
        <authorList>
            <person name="van der Hoeven F."/>
            <person name="Sordino P."/>
            <person name="Fraudeau N."/>
            <person name="Izpisua-Belmonte J.-C."/>
            <person name="Duboule D."/>
        </authorList>
    </citation>
    <scope>NUCLEOTIDE SEQUENCE [GENOMIC DNA]</scope>
    <scope>DEVELOPMENTAL STAGE</scope>
</reference>
<reference key="2">
    <citation type="journal article" date="2005" name="Evol. Dev.">
        <title>Genomic annotation and transcriptome analysis of the zebrafish (Danio rerio) hox complex with description of a novel member, hoxb13a.</title>
        <authorList>
            <person name="Corredor-Adamez M."/>
            <person name="Welten M.C.M."/>
            <person name="Spaink H.P."/>
            <person name="Jeffery J.E."/>
            <person name="Schoon R.T."/>
            <person name="de Bakker M.A.G."/>
            <person name="Bagowski C.P."/>
            <person name="Meijer A.H."/>
            <person name="Verbeek F.J."/>
            <person name="Richardson M.K."/>
        </authorList>
    </citation>
    <scope>NUCLEOTIDE SEQUENCE [MRNA] OF 73-204</scope>
    <source>
        <strain>Tuebingen</strain>
    </source>
</reference>
<reference key="3">
    <citation type="journal article" date="1998" name="Development">
        <title>Zebrafish hox genes: genomic organization and modified colinear expression patterns in the trunk.</title>
        <authorList>
            <person name="Prince V.E."/>
            <person name="Joly L."/>
            <person name="Ekker M."/>
            <person name="Ho R.K."/>
        </authorList>
    </citation>
    <scope>NUCLEOTIDE SEQUENCE [MRNA] OF 216-262</scope>
    <source>
        <tissue>Embryo</tissue>
    </source>
</reference>
<gene>
    <name type="primary">hoxd12a</name>
    <name type="synonym">hox-d12</name>
    <name type="synonym">hoxd12</name>
</gene>
<accession>Q90471</accession>
<accession>O57373</accession>
<accession>Q4JMC8</accession>
<feature type="chain" id="PRO_0000200241" description="Homeobox protein Hox-D12a">
    <location>
        <begin position="1"/>
        <end position="262"/>
    </location>
</feature>
<feature type="DNA-binding region" description="Homeobox" evidence="2">
    <location>
        <begin position="194"/>
        <end position="253"/>
    </location>
</feature>
<feature type="region of interest" description="Disordered" evidence="3">
    <location>
        <begin position="107"/>
        <end position="130"/>
    </location>
</feature>
<feature type="sequence conflict" description="In Ref. 3." evidence="5" ref="3">
    <original>IN</original>
    <variation>MT</variation>
    <location>
        <begin position="219"/>
        <end position="220"/>
    </location>
</feature>
<evidence type="ECO:0000250" key="1"/>
<evidence type="ECO:0000255" key="2">
    <source>
        <dbReference type="PROSITE-ProRule" id="PRU00108"/>
    </source>
</evidence>
<evidence type="ECO:0000256" key="3">
    <source>
        <dbReference type="SAM" id="MobiDB-lite"/>
    </source>
</evidence>
<evidence type="ECO:0000269" key="4">
    <source>
    </source>
</evidence>
<evidence type="ECO:0000305" key="5"/>
<proteinExistence type="evidence at transcript level"/>
<sequence>MCEHNLLSSGYVAPLLNFHSPDSLYLQNLRGNGVHLSGLPQMSYSRREVCSLPWSSSNSCTAPAQSRAYSGYSQPFFSNSAAVSASLNTHKKGSLEESGRYYFQDVSHKSEEPGRPNAAYASEQSSASNGLSNLERRQLNAVAPNELSCIEQPESDASKQSVSSIAPFQPSLSAQNIRPAFTDGLPWCPSQVRSRKKRKPYTKPQLTELENEFMMNEFINRQKRKELSDRLELSDQQVKIWFQNRRMKKKRLMMREHTFTIY</sequence>
<organism>
    <name type="scientific">Danio rerio</name>
    <name type="common">Zebrafish</name>
    <name type="synonym">Brachydanio rerio</name>
    <dbReference type="NCBI Taxonomy" id="7955"/>
    <lineage>
        <taxon>Eukaryota</taxon>
        <taxon>Metazoa</taxon>
        <taxon>Chordata</taxon>
        <taxon>Craniata</taxon>
        <taxon>Vertebrata</taxon>
        <taxon>Euteleostomi</taxon>
        <taxon>Actinopterygii</taxon>
        <taxon>Neopterygii</taxon>
        <taxon>Teleostei</taxon>
        <taxon>Ostariophysi</taxon>
        <taxon>Cypriniformes</taxon>
        <taxon>Danionidae</taxon>
        <taxon>Danioninae</taxon>
        <taxon>Danio</taxon>
    </lineage>
</organism>
<comment type="function">
    <text evidence="1">Sequence-specific transcription factor which is part of a developmental regulatory system that provides cells with specific positional identities on the anterior-posterior axis.</text>
</comment>
<comment type="subcellular location">
    <subcellularLocation>
        <location>Nucleus</location>
    </subcellularLocation>
</comment>
<comment type="developmental stage">
    <text evidence="4">First expressed at 14 hours post-fertilization (hpf) in the dorsal pre-somitic mesoderm and neural keel at posterior levels, extending into the ventral somitic mesoderm during budding. At 22-26 hpf, expression decreases in the lateral and ventral mesoderm, but is maintained in the neural rod. Expression decreases from posterior to anterior with an anterior expression limit at somite 17. Also expressed in the developing hindgut, except in the most distal portion. At 24-26 hpf, posterior expression begin to weaken and is undetectable by 40-56 hpf.</text>
</comment>
<comment type="similarity">
    <text evidence="5">Belongs to the Abd-B homeobox family.</text>
</comment>
<comment type="sequence caution" evidence="5">
    <conflict type="erroneous gene model prediction">
        <sequence resource="EMBL-CDS" id="CAA61032"/>
    </conflict>
</comment>
<comment type="sequence caution" evidence="5">
    <conflict type="frameshift">
        <sequence resource="EMBL-CDS" id="CAA61032"/>
    </conflict>
</comment>
<comment type="sequence caution" evidence="5">
    <conflict type="frameshift">
        <sequence resource="EMBL-CDS" id="CAA74882"/>
    </conflict>
</comment>